<sequence length="358" mass="39067">MASVSLRKLDKSYGALRIVKGIDLEINDGEFVVFVGPSGCGKSTTLRMVAGLESITGGEVKIGDRVVNQLPPRERDIAMVFQDYALYPHKTVRENMGFSLKVRGVSASQANASIDEAAKMLGIEHLLDRRPGQLSGGQRQRVAMGRAIVRRPQVFLFDEPLSNLDAKLRGQVRTEIKRLHQQLGTTIIYVTHDQVEAMTLADRIVILRGGDIEQVGTPDEVYNRPESVFVGGFVGAPAMNFARARVNGDRLAFSDGNSLPMAAIRPSRETGLEGRDVIVGIRPEHFGPAEGFDSQLAVSVQVVEPLGSDTLVHFSLGDAALTARMPPQLRPTPNEELRIGVDPSKVHLFDATTERSIH</sequence>
<accession>Q7CS28</accession>
<evidence type="ECO:0000255" key="1">
    <source>
        <dbReference type="PROSITE-ProRule" id="PRU00434"/>
    </source>
</evidence>
<evidence type="ECO:0000303" key="2">
    <source>
    </source>
</evidence>
<evidence type="ECO:0000305" key="3"/>
<evidence type="ECO:0000305" key="4">
    <source>
    </source>
</evidence>
<evidence type="ECO:0000312" key="5">
    <source>
        <dbReference type="EMBL" id="AAK90109.2"/>
    </source>
</evidence>
<comment type="function">
    <text evidence="3 4">Part of the ABC transporter complex SmoEFGH involved in sulfoquinovosyl glycerol (SQGro) uptake (Probable). Responsible for energy coupling to the transport system (Probable).</text>
</comment>
<comment type="subunit">
    <text evidence="4">The complex is probably composed of two ATP-binding proteins (SmoE), two transmembrane proteins (SmoG and SmoH) and a solute-binding protein (SmoF).</text>
</comment>
<comment type="subcellular location">
    <subcellularLocation>
        <location evidence="3">Cell inner membrane</location>
        <topology evidence="3">Peripheral membrane protein</topology>
    </subcellularLocation>
</comment>
<comment type="similarity">
    <text evidence="3">Belongs to the ABC transporter superfamily.</text>
</comment>
<name>SMOE_AGRFC</name>
<gene>
    <name evidence="2" type="primary">smoE</name>
    <name evidence="5" type="ordered locus">Atu3281</name>
</gene>
<keyword id="KW-0067">ATP-binding</keyword>
<keyword id="KW-0997">Cell inner membrane</keyword>
<keyword id="KW-1003">Cell membrane</keyword>
<keyword id="KW-0472">Membrane</keyword>
<keyword id="KW-0547">Nucleotide-binding</keyword>
<keyword id="KW-1185">Reference proteome</keyword>
<keyword id="KW-0762">Sugar transport</keyword>
<keyword id="KW-1278">Translocase</keyword>
<keyword id="KW-0813">Transport</keyword>
<reference key="1">
    <citation type="journal article" date="2001" name="Science">
        <title>The genome of the natural genetic engineer Agrobacterium tumefaciens C58.</title>
        <authorList>
            <person name="Wood D.W."/>
            <person name="Setubal J.C."/>
            <person name="Kaul R."/>
            <person name="Monks D.E."/>
            <person name="Kitajima J.P."/>
            <person name="Okura V.K."/>
            <person name="Zhou Y."/>
            <person name="Chen L."/>
            <person name="Wood G.E."/>
            <person name="Almeida N.F. Jr."/>
            <person name="Woo L."/>
            <person name="Chen Y."/>
            <person name="Paulsen I.T."/>
            <person name="Eisen J.A."/>
            <person name="Karp P.D."/>
            <person name="Bovee D. Sr."/>
            <person name="Chapman P."/>
            <person name="Clendenning J."/>
            <person name="Deatherage G."/>
            <person name="Gillet W."/>
            <person name="Grant C."/>
            <person name="Kutyavin T."/>
            <person name="Levy R."/>
            <person name="Li M.-J."/>
            <person name="McClelland E."/>
            <person name="Palmieri A."/>
            <person name="Raymond C."/>
            <person name="Rouse G."/>
            <person name="Saenphimmachak C."/>
            <person name="Wu Z."/>
            <person name="Romero P."/>
            <person name="Gordon D."/>
            <person name="Zhang S."/>
            <person name="Yoo H."/>
            <person name="Tao Y."/>
            <person name="Biddle P."/>
            <person name="Jung M."/>
            <person name="Krespan W."/>
            <person name="Perry M."/>
            <person name="Gordon-Kamm B."/>
            <person name="Liao L."/>
            <person name="Kim S."/>
            <person name="Hendrick C."/>
            <person name="Zhao Z.-Y."/>
            <person name="Dolan M."/>
            <person name="Chumley F."/>
            <person name="Tingey S.V."/>
            <person name="Tomb J.-F."/>
            <person name="Gordon M.P."/>
            <person name="Olson M.V."/>
            <person name="Nester E.W."/>
        </authorList>
    </citation>
    <scope>NUCLEOTIDE SEQUENCE [LARGE SCALE GENOMIC DNA]</scope>
    <source>
        <strain>C58 / ATCC 33970</strain>
    </source>
</reference>
<reference key="2">
    <citation type="journal article" date="2001" name="Science">
        <title>Genome sequence of the plant pathogen and biotechnology agent Agrobacterium tumefaciens C58.</title>
        <authorList>
            <person name="Goodner B."/>
            <person name="Hinkle G."/>
            <person name="Gattung S."/>
            <person name="Miller N."/>
            <person name="Blanchard M."/>
            <person name="Qurollo B."/>
            <person name="Goldman B.S."/>
            <person name="Cao Y."/>
            <person name="Askenazi M."/>
            <person name="Halling C."/>
            <person name="Mullin L."/>
            <person name="Houmiel K."/>
            <person name="Gordon J."/>
            <person name="Vaudin M."/>
            <person name="Iartchouk O."/>
            <person name="Epp A."/>
            <person name="Liu F."/>
            <person name="Wollam C."/>
            <person name="Allinger M."/>
            <person name="Doughty D."/>
            <person name="Scott C."/>
            <person name="Lappas C."/>
            <person name="Markelz B."/>
            <person name="Flanagan C."/>
            <person name="Crowell C."/>
            <person name="Gurson J."/>
            <person name="Lomo C."/>
            <person name="Sear C."/>
            <person name="Strub G."/>
            <person name="Cielo C."/>
            <person name="Slater S."/>
        </authorList>
    </citation>
    <scope>NUCLEOTIDE SEQUENCE [LARGE SCALE GENOMIC DNA]</scope>
    <source>
        <strain>C58 / ATCC 33970</strain>
    </source>
</reference>
<reference key="3">
    <citation type="journal article" date="2022" name="Proc. Natl. Acad. Sci. U.S.A.">
        <title>Oxidative desulfurization pathway for complete catabolism of sulfoquinovose by bacteria.</title>
        <authorList>
            <person name="Sharma M."/>
            <person name="Lingford J.P."/>
            <person name="Petricevic M."/>
            <person name="Snow A.J.D."/>
            <person name="Zhang Y."/>
            <person name="Jaervaa M.A."/>
            <person name="Mui J.W."/>
            <person name="Scott N.E."/>
            <person name="Saunders E.C."/>
            <person name="Mao R."/>
            <person name="Epa R."/>
            <person name="da Silva B.M."/>
            <person name="Pires D.E.V."/>
            <person name="Ascher D.B."/>
            <person name="McConville M.J."/>
            <person name="Davies G.J."/>
            <person name="Williams S.J."/>
            <person name="Goddard-Borger E.D."/>
        </authorList>
    </citation>
    <scope>PROBABLE FUNCTION</scope>
    <scope>SUBUNIT</scope>
    <source>
        <strain>C58 / ATCC 33970</strain>
    </source>
</reference>
<organism>
    <name type="scientific">Agrobacterium fabrum (strain C58 / ATCC 33970)</name>
    <name type="common">Agrobacterium tumefaciens (strain C58)</name>
    <dbReference type="NCBI Taxonomy" id="176299"/>
    <lineage>
        <taxon>Bacteria</taxon>
        <taxon>Pseudomonadati</taxon>
        <taxon>Pseudomonadota</taxon>
        <taxon>Alphaproteobacteria</taxon>
        <taxon>Hyphomicrobiales</taxon>
        <taxon>Rhizobiaceae</taxon>
        <taxon>Rhizobium/Agrobacterium group</taxon>
        <taxon>Agrobacterium</taxon>
        <taxon>Agrobacterium tumefaciens complex</taxon>
    </lineage>
</organism>
<protein>
    <recommendedName>
        <fullName evidence="3">Sulfoquinovosyl glycerol transport ATP-binding protein SmoE</fullName>
        <shortName evidence="3">SQGro transport ATP-binding protein SmoE</shortName>
        <ecNumber evidence="4">7.5.2.-</ecNumber>
    </recommendedName>
    <alternativeName>
        <fullName evidence="2">SQ monooxygenase cluster protein E</fullName>
    </alternativeName>
</protein>
<proteinExistence type="evidence at protein level"/>
<feature type="chain" id="PRO_0000458920" description="Sulfoquinovosyl glycerol transport ATP-binding protein SmoE">
    <location>
        <begin position="1"/>
        <end position="358"/>
    </location>
</feature>
<feature type="domain" description="ABC transporter" evidence="1">
    <location>
        <begin position="4"/>
        <end position="234"/>
    </location>
</feature>
<feature type="binding site" evidence="1">
    <location>
        <begin position="36"/>
        <end position="43"/>
    </location>
    <ligand>
        <name>ATP</name>
        <dbReference type="ChEBI" id="CHEBI:30616"/>
    </ligand>
</feature>
<dbReference type="EC" id="7.5.2.-" evidence="4"/>
<dbReference type="EMBL" id="AE007870">
    <property type="protein sequence ID" value="AAK90109.2"/>
    <property type="molecule type" value="Genomic_DNA"/>
</dbReference>
<dbReference type="RefSeq" id="NP_357324.2">
    <property type="nucleotide sequence ID" value="NC_003063.2"/>
</dbReference>
<dbReference type="RefSeq" id="WP_010972908.1">
    <property type="nucleotide sequence ID" value="NC_003063.2"/>
</dbReference>
<dbReference type="SMR" id="Q7CS28"/>
<dbReference type="STRING" id="176299.Atu3281"/>
<dbReference type="EnsemblBacteria" id="AAK90109">
    <property type="protein sequence ID" value="AAK90109"/>
    <property type="gene ID" value="Atu3281"/>
</dbReference>
<dbReference type="GeneID" id="1135155"/>
<dbReference type="KEGG" id="atu:Atu3281"/>
<dbReference type="PATRIC" id="fig|176299.10.peg.3122"/>
<dbReference type="eggNOG" id="COG3842">
    <property type="taxonomic scope" value="Bacteria"/>
</dbReference>
<dbReference type="HOGENOM" id="CLU_000604_1_1_5"/>
<dbReference type="OrthoDB" id="8188565at2"/>
<dbReference type="PhylomeDB" id="Q7CS28"/>
<dbReference type="BioCyc" id="AGRO:ATU3281-MONOMER"/>
<dbReference type="BioCyc" id="MetaCyc:MONOMER-21949"/>
<dbReference type="Proteomes" id="UP000000813">
    <property type="component" value="Chromosome linear"/>
</dbReference>
<dbReference type="GO" id="GO:0055052">
    <property type="term" value="C:ATP-binding cassette (ABC) transporter complex, substrate-binding subunit-containing"/>
    <property type="evidence" value="ECO:0007669"/>
    <property type="project" value="TreeGrafter"/>
</dbReference>
<dbReference type="GO" id="GO:0140359">
    <property type="term" value="F:ABC-type transporter activity"/>
    <property type="evidence" value="ECO:0007669"/>
    <property type="project" value="InterPro"/>
</dbReference>
<dbReference type="GO" id="GO:0005524">
    <property type="term" value="F:ATP binding"/>
    <property type="evidence" value="ECO:0007669"/>
    <property type="project" value="UniProtKB-KW"/>
</dbReference>
<dbReference type="GO" id="GO:0016887">
    <property type="term" value="F:ATP hydrolysis activity"/>
    <property type="evidence" value="ECO:0007669"/>
    <property type="project" value="InterPro"/>
</dbReference>
<dbReference type="GO" id="GO:0008643">
    <property type="term" value="P:carbohydrate transport"/>
    <property type="evidence" value="ECO:0007669"/>
    <property type="project" value="InterPro"/>
</dbReference>
<dbReference type="CDD" id="cd03301">
    <property type="entry name" value="ABC_MalK_N"/>
    <property type="match status" value="1"/>
</dbReference>
<dbReference type="FunFam" id="3.40.50.300:FF:000042">
    <property type="entry name" value="Maltose/maltodextrin ABC transporter, ATP-binding protein"/>
    <property type="match status" value="1"/>
</dbReference>
<dbReference type="Gene3D" id="2.40.50.100">
    <property type="match status" value="1"/>
</dbReference>
<dbReference type="Gene3D" id="2.40.50.140">
    <property type="entry name" value="Nucleic acid-binding proteins"/>
    <property type="match status" value="1"/>
</dbReference>
<dbReference type="Gene3D" id="3.40.50.300">
    <property type="entry name" value="P-loop containing nucleotide triphosphate hydrolases"/>
    <property type="match status" value="1"/>
</dbReference>
<dbReference type="InterPro" id="IPR003593">
    <property type="entry name" value="AAA+_ATPase"/>
</dbReference>
<dbReference type="InterPro" id="IPR003439">
    <property type="entry name" value="ABC_transporter-like_ATP-bd"/>
</dbReference>
<dbReference type="InterPro" id="IPR017871">
    <property type="entry name" value="ABC_transporter-like_CS"/>
</dbReference>
<dbReference type="InterPro" id="IPR015855">
    <property type="entry name" value="ABC_transpr_MalK-like"/>
</dbReference>
<dbReference type="InterPro" id="IPR047641">
    <property type="entry name" value="ABC_transpr_MalK/UgpC-like"/>
</dbReference>
<dbReference type="InterPro" id="IPR008995">
    <property type="entry name" value="Mo/tungstate-bd_C_term_dom"/>
</dbReference>
<dbReference type="InterPro" id="IPR012340">
    <property type="entry name" value="NA-bd_OB-fold"/>
</dbReference>
<dbReference type="InterPro" id="IPR040582">
    <property type="entry name" value="OB_MalK-like"/>
</dbReference>
<dbReference type="InterPro" id="IPR027417">
    <property type="entry name" value="P-loop_NTPase"/>
</dbReference>
<dbReference type="InterPro" id="IPR005116">
    <property type="entry name" value="Transp-assoc_OB_typ1"/>
</dbReference>
<dbReference type="NCBIfam" id="NF008653">
    <property type="entry name" value="PRK11650.1"/>
    <property type="match status" value="1"/>
</dbReference>
<dbReference type="PANTHER" id="PTHR43875">
    <property type="entry name" value="MALTODEXTRIN IMPORT ATP-BINDING PROTEIN MSMX"/>
    <property type="match status" value="1"/>
</dbReference>
<dbReference type="PANTHER" id="PTHR43875:SF1">
    <property type="entry name" value="OSMOPROTECTIVE COMPOUNDS UPTAKE ATP-BINDING PROTEIN GGTA"/>
    <property type="match status" value="1"/>
</dbReference>
<dbReference type="Pfam" id="PF00005">
    <property type="entry name" value="ABC_tran"/>
    <property type="match status" value="1"/>
</dbReference>
<dbReference type="Pfam" id="PF17912">
    <property type="entry name" value="OB_MalK"/>
    <property type="match status" value="1"/>
</dbReference>
<dbReference type="Pfam" id="PF03459">
    <property type="entry name" value="TOBE"/>
    <property type="match status" value="1"/>
</dbReference>
<dbReference type="SMART" id="SM00382">
    <property type="entry name" value="AAA"/>
    <property type="match status" value="1"/>
</dbReference>
<dbReference type="SUPFAM" id="SSF50331">
    <property type="entry name" value="MOP-like"/>
    <property type="match status" value="1"/>
</dbReference>
<dbReference type="SUPFAM" id="SSF52540">
    <property type="entry name" value="P-loop containing nucleoside triphosphate hydrolases"/>
    <property type="match status" value="1"/>
</dbReference>
<dbReference type="PROSITE" id="PS00211">
    <property type="entry name" value="ABC_TRANSPORTER_1"/>
    <property type="match status" value="1"/>
</dbReference>
<dbReference type="PROSITE" id="PS50893">
    <property type="entry name" value="ABC_TRANSPORTER_2"/>
    <property type="match status" value="1"/>
</dbReference>